<reference key="1">
    <citation type="journal article" date="2000" name="Nature">
        <title>Sequence and analysis of chromosome 3 of the plant Arabidopsis thaliana.</title>
        <authorList>
            <person name="Salanoubat M."/>
            <person name="Lemcke K."/>
            <person name="Rieger M."/>
            <person name="Ansorge W."/>
            <person name="Unseld M."/>
            <person name="Fartmann B."/>
            <person name="Valle G."/>
            <person name="Bloecker H."/>
            <person name="Perez-Alonso M."/>
            <person name="Obermaier B."/>
            <person name="Delseny M."/>
            <person name="Boutry M."/>
            <person name="Grivell L.A."/>
            <person name="Mache R."/>
            <person name="Puigdomenech P."/>
            <person name="De Simone V."/>
            <person name="Choisne N."/>
            <person name="Artiguenave F."/>
            <person name="Robert C."/>
            <person name="Brottier P."/>
            <person name="Wincker P."/>
            <person name="Cattolico L."/>
            <person name="Weissenbach J."/>
            <person name="Saurin W."/>
            <person name="Quetier F."/>
            <person name="Schaefer M."/>
            <person name="Mueller-Auer S."/>
            <person name="Gabel C."/>
            <person name="Fuchs M."/>
            <person name="Benes V."/>
            <person name="Wurmbach E."/>
            <person name="Drzonek H."/>
            <person name="Erfle H."/>
            <person name="Jordan N."/>
            <person name="Bangert S."/>
            <person name="Wiedelmann R."/>
            <person name="Kranz H."/>
            <person name="Voss H."/>
            <person name="Holland R."/>
            <person name="Brandt P."/>
            <person name="Nyakatura G."/>
            <person name="Vezzi A."/>
            <person name="D'Angelo M."/>
            <person name="Pallavicini A."/>
            <person name="Toppo S."/>
            <person name="Simionati B."/>
            <person name="Conrad A."/>
            <person name="Hornischer K."/>
            <person name="Kauer G."/>
            <person name="Loehnert T.-H."/>
            <person name="Nordsiek G."/>
            <person name="Reichelt J."/>
            <person name="Scharfe M."/>
            <person name="Schoen O."/>
            <person name="Bargues M."/>
            <person name="Terol J."/>
            <person name="Climent J."/>
            <person name="Navarro P."/>
            <person name="Collado C."/>
            <person name="Perez-Perez A."/>
            <person name="Ottenwaelder B."/>
            <person name="Duchemin D."/>
            <person name="Cooke R."/>
            <person name="Laudie M."/>
            <person name="Berger-Llauro C."/>
            <person name="Purnelle B."/>
            <person name="Masuy D."/>
            <person name="de Haan M."/>
            <person name="Maarse A.C."/>
            <person name="Alcaraz J.-P."/>
            <person name="Cottet A."/>
            <person name="Casacuberta E."/>
            <person name="Monfort A."/>
            <person name="Argiriou A."/>
            <person name="Flores M."/>
            <person name="Liguori R."/>
            <person name="Vitale D."/>
            <person name="Mannhaupt G."/>
            <person name="Haase D."/>
            <person name="Schoof H."/>
            <person name="Rudd S."/>
            <person name="Zaccaria P."/>
            <person name="Mewes H.-W."/>
            <person name="Mayer K.F.X."/>
            <person name="Kaul S."/>
            <person name="Town C.D."/>
            <person name="Koo H.L."/>
            <person name="Tallon L.J."/>
            <person name="Jenkins J."/>
            <person name="Rooney T."/>
            <person name="Rizzo M."/>
            <person name="Walts A."/>
            <person name="Utterback T."/>
            <person name="Fujii C.Y."/>
            <person name="Shea T.P."/>
            <person name="Creasy T.H."/>
            <person name="Haas B."/>
            <person name="Maiti R."/>
            <person name="Wu D."/>
            <person name="Peterson J."/>
            <person name="Van Aken S."/>
            <person name="Pai G."/>
            <person name="Militscher J."/>
            <person name="Sellers P."/>
            <person name="Gill J.E."/>
            <person name="Feldblyum T.V."/>
            <person name="Preuss D."/>
            <person name="Lin X."/>
            <person name="Nierman W.C."/>
            <person name="Salzberg S.L."/>
            <person name="White O."/>
            <person name="Venter J.C."/>
            <person name="Fraser C.M."/>
            <person name="Kaneko T."/>
            <person name="Nakamura Y."/>
            <person name="Sato S."/>
            <person name="Kato T."/>
            <person name="Asamizu E."/>
            <person name="Sasamoto S."/>
            <person name="Kimura T."/>
            <person name="Idesawa K."/>
            <person name="Kawashima K."/>
            <person name="Kishida Y."/>
            <person name="Kiyokawa C."/>
            <person name="Kohara M."/>
            <person name="Matsumoto M."/>
            <person name="Matsuno A."/>
            <person name="Muraki A."/>
            <person name="Nakayama S."/>
            <person name="Nakazaki N."/>
            <person name="Shinpo S."/>
            <person name="Takeuchi C."/>
            <person name="Wada T."/>
            <person name="Watanabe A."/>
            <person name="Yamada M."/>
            <person name="Yasuda M."/>
            <person name="Tabata S."/>
        </authorList>
    </citation>
    <scope>NUCLEOTIDE SEQUENCE [LARGE SCALE GENOMIC DNA]</scope>
    <source>
        <strain>cv. Columbia</strain>
    </source>
</reference>
<reference key="2">
    <citation type="journal article" date="2017" name="Plant J.">
        <title>Araport11: a complete reannotation of the Arabidopsis thaliana reference genome.</title>
        <authorList>
            <person name="Cheng C.Y."/>
            <person name="Krishnakumar V."/>
            <person name="Chan A.P."/>
            <person name="Thibaud-Nissen F."/>
            <person name="Schobel S."/>
            <person name="Town C.D."/>
        </authorList>
    </citation>
    <scope>GENOME REANNOTATION</scope>
    <source>
        <strain>cv. Columbia</strain>
    </source>
</reference>
<reference key="3">
    <citation type="journal article" date="2003" name="Science">
        <title>Empirical analysis of transcriptional activity in the Arabidopsis genome.</title>
        <authorList>
            <person name="Yamada K."/>
            <person name="Lim J."/>
            <person name="Dale J.M."/>
            <person name="Chen H."/>
            <person name="Shinn P."/>
            <person name="Palm C.J."/>
            <person name="Southwick A.M."/>
            <person name="Wu H.C."/>
            <person name="Kim C.J."/>
            <person name="Nguyen M."/>
            <person name="Pham P.K."/>
            <person name="Cheuk R.F."/>
            <person name="Karlin-Newmann G."/>
            <person name="Liu S.X."/>
            <person name="Lam B."/>
            <person name="Sakano H."/>
            <person name="Wu T."/>
            <person name="Yu G."/>
            <person name="Miranda M."/>
            <person name="Quach H.L."/>
            <person name="Tripp M."/>
            <person name="Chang C.H."/>
            <person name="Lee J.M."/>
            <person name="Toriumi M.J."/>
            <person name="Chan M.M."/>
            <person name="Tang C.C."/>
            <person name="Onodera C.S."/>
            <person name="Deng J.M."/>
            <person name="Akiyama K."/>
            <person name="Ansari Y."/>
            <person name="Arakawa T."/>
            <person name="Banh J."/>
            <person name="Banno F."/>
            <person name="Bowser L."/>
            <person name="Brooks S.Y."/>
            <person name="Carninci P."/>
            <person name="Chao Q."/>
            <person name="Choy N."/>
            <person name="Enju A."/>
            <person name="Goldsmith A.D."/>
            <person name="Gurjal M."/>
            <person name="Hansen N.F."/>
            <person name="Hayashizaki Y."/>
            <person name="Johnson-Hopson C."/>
            <person name="Hsuan V.W."/>
            <person name="Iida K."/>
            <person name="Karnes M."/>
            <person name="Khan S."/>
            <person name="Koesema E."/>
            <person name="Ishida J."/>
            <person name="Jiang P.X."/>
            <person name="Jones T."/>
            <person name="Kawai J."/>
            <person name="Kamiya A."/>
            <person name="Meyers C."/>
            <person name="Nakajima M."/>
            <person name="Narusaka M."/>
            <person name="Seki M."/>
            <person name="Sakurai T."/>
            <person name="Satou M."/>
            <person name="Tamse R."/>
            <person name="Vaysberg M."/>
            <person name="Wallender E.K."/>
            <person name="Wong C."/>
            <person name="Yamamura Y."/>
            <person name="Yuan S."/>
            <person name="Shinozaki K."/>
            <person name="Davis R.W."/>
            <person name="Theologis A."/>
            <person name="Ecker J.R."/>
        </authorList>
    </citation>
    <scope>NUCLEOTIDE SEQUENCE [LARGE SCALE MRNA]</scope>
    <source>
        <strain>cv. Columbia</strain>
    </source>
</reference>
<reference key="4">
    <citation type="journal article" date="2005" name="Plant Physiol.">
        <title>Phylogenomic analysis of the receptor-like proteins of rice and Arabidopsis.</title>
        <authorList>
            <person name="Fritz-Laylin L.K."/>
            <person name="Krishnamurthy N."/>
            <person name="Toer M."/>
            <person name="Sjoelander K.V."/>
            <person name="Jones J.D."/>
        </authorList>
    </citation>
    <scope>GENE FAMILY</scope>
</reference>
<reference key="5">
    <citation type="journal article" date="2008" name="Plant Physiol.">
        <title>A genome-wide functional investigation into the roles of receptor-like proteins in Arabidopsis.</title>
        <authorList>
            <person name="Wang G."/>
            <person name="Ellendorff U."/>
            <person name="Kemp B."/>
            <person name="Mansfield J.W."/>
            <person name="Forsyth A."/>
            <person name="Mitchell K."/>
            <person name="Bastas K."/>
            <person name="Liu C.-M."/>
            <person name="Woods-Toer A."/>
            <person name="Zipfel C."/>
            <person name="de Wit P.J.G.M."/>
            <person name="Jones J.D.G."/>
            <person name="Toer M."/>
            <person name="Thomma B.P.H.J."/>
        </authorList>
    </citation>
    <scope>GENE FAMILY</scope>
    <scope>NOMENCLATURE</scope>
    <source>
        <strain>cv. Columbia</strain>
    </source>
</reference>
<organism>
    <name type="scientific">Arabidopsis thaliana</name>
    <name type="common">Mouse-ear cress</name>
    <dbReference type="NCBI Taxonomy" id="3702"/>
    <lineage>
        <taxon>Eukaryota</taxon>
        <taxon>Viridiplantae</taxon>
        <taxon>Streptophyta</taxon>
        <taxon>Embryophyta</taxon>
        <taxon>Tracheophyta</taxon>
        <taxon>Spermatophyta</taxon>
        <taxon>Magnoliopsida</taxon>
        <taxon>eudicotyledons</taxon>
        <taxon>Gunneridae</taxon>
        <taxon>Pentapetalae</taxon>
        <taxon>rosids</taxon>
        <taxon>malvids</taxon>
        <taxon>Brassicales</taxon>
        <taxon>Brassicaceae</taxon>
        <taxon>Camelineae</taxon>
        <taxon>Arabidopsis</taxon>
    </lineage>
</organism>
<dbReference type="EMBL" id="AC011620">
    <property type="protein sequence ID" value="AAF26132.1"/>
    <property type="molecule type" value="Genomic_DNA"/>
</dbReference>
<dbReference type="EMBL" id="CP002686">
    <property type="protein sequence ID" value="AEE74272.1"/>
    <property type="molecule type" value="Genomic_DNA"/>
</dbReference>
<dbReference type="EMBL" id="AY075647">
    <property type="status" value="NOT_ANNOTATED_CDS"/>
    <property type="molecule type" value="mRNA"/>
</dbReference>
<dbReference type="RefSeq" id="NP_187216.1">
    <property type="nucleotide sequence ID" value="NM_111438.3"/>
</dbReference>
<dbReference type="SMR" id="Q9M9X0"/>
<dbReference type="FunCoup" id="Q9M9X0">
    <property type="interactions" value="58"/>
</dbReference>
<dbReference type="STRING" id="3702.Q9M9X0"/>
<dbReference type="GlyCosmos" id="Q9M9X0">
    <property type="glycosylation" value="17 sites, No reported glycans"/>
</dbReference>
<dbReference type="GlyGen" id="Q9M9X0">
    <property type="glycosylation" value="17 sites"/>
</dbReference>
<dbReference type="PaxDb" id="3702-AT3G05650.1"/>
<dbReference type="ProteomicsDB" id="228136"/>
<dbReference type="EnsemblPlants" id="AT3G05650.1">
    <property type="protein sequence ID" value="AT3G05650.1"/>
    <property type="gene ID" value="AT3G05650"/>
</dbReference>
<dbReference type="GeneID" id="819732"/>
<dbReference type="Gramene" id="AT3G05650.1">
    <property type="protein sequence ID" value="AT3G05650.1"/>
    <property type="gene ID" value="AT3G05650"/>
</dbReference>
<dbReference type="KEGG" id="ath:AT3G05650"/>
<dbReference type="Araport" id="AT3G05650"/>
<dbReference type="TAIR" id="AT3G05650">
    <property type="gene designation" value="RLP32"/>
</dbReference>
<dbReference type="eggNOG" id="KOG0619">
    <property type="taxonomic scope" value="Eukaryota"/>
</dbReference>
<dbReference type="HOGENOM" id="CLU_000288_18_3_1"/>
<dbReference type="InParanoid" id="Q9M9X0"/>
<dbReference type="OMA" id="YSWELTN"/>
<dbReference type="PhylomeDB" id="Q9M9X0"/>
<dbReference type="PRO" id="PR:Q9M9X0"/>
<dbReference type="Proteomes" id="UP000006548">
    <property type="component" value="Chromosome 3"/>
</dbReference>
<dbReference type="ExpressionAtlas" id="Q9M9X0">
    <property type="expression patterns" value="baseline and differential"/>
</dbReference>
<dbReference type="GO" id="GO:0005886">
    <property type="term" value="C:plasma membrane"/>
    <property type="evidence" value="ECO:0007669"/>
    <property type="project" value="UniProtKB-SubCell"/>
</dbReference>
<dbReference type="FunFam" id="3.80.10.10:FF:000111">
    <property type="entry name" value="LRR receptor-like serine/threonine-protein kinase ERECTA"/>
    <property type="match status" value="1"/>
</dbReference>
<dbReference type="FunFam" id="3.80.10.10:FF:000095">
    <property type="entry name" value="LRR receptor-like serine/threonine-protein kinase GSO1"/>
    <property type="match status" value="2"/>
</dbReference>
<dbReference type="Gene3D" id="3.80.10.10">
    <property type="entry name" value="Ribonuclease Inhibitor"/>
    <property type="match status" value="2"/>
</dbReference>
<dbReference type="InterPro" id="IPR001611">
    <property type="entry name" value="Leu-rich_rpt"/>
</dbReference>
<dbReference type="InterPro" id="IPR003591">
    <property type="entry name" value="Leu-rich_rpt_typical-subtyp"/>
</dbReference>
<dbReference type="InterPro" id="IPR032675">
    <property type="entry name" value="LRR_dom_sf"/>
</dbReference>
<dbReference type="InterPro" id="IPR013210">
    <property type="entry name" value="LRR_N_plant-typ"/>
</dbReference>
<dbReference type="InterPro" id="IPR055414">
    <property type="entry name" value="LRR_R13L4/SHOC2-like"/>
</dbReference>
<dbReference type="InterPro" id="IPR046956">
    <property type="entry name" value="RLP23-like"/>
</dbReference>
<dbReference type="PANTHER" id="PTHR48061:SF12">
    <property type="entry name" value="DISEASE RESISTANCE LIKE PROTEIN"/>
    <property type="match status" value="1"/>
</dbReference>
<dbReference type="PANTHER" id="PTHR48061">
    <property type="entry name" value="LEUCINE-RICH REPEAT RECEPTOR PROTEIN KINASE EMS1-LIKE-RELATED"/>
    <property type="match status" value="1"/>
</dbReference>
<dbReference type="Pfam" id="PF00560">
    <property type="entry name" value="LRR_1"/>
    <property type="match status" value="5"/>
</dbReference>
<dbReference type="Pfam" id="PF23598">
    <property type="entry name" value="LRR_14"/>
    <property type="match status" value="1"/>
</dbReference>
<dbReference type="Pfam" id="PF13855">
    <property type="entry name" value="LRR_8"/>
    <property type="match status" value="1"/>
</dbReference>
<dbReference type="Pfam" id="PF08263">
    <property type="entry name" value="LRRNT_2"/>
    <property type="match status" value="1"/>
</dbReference>
<dbReference type="PRINTS" id="PR00019">
    <property type="entry name" value="LEURICHRPT"/>
</dbReference>
<dbReference type="SMART" id="SM00369">
    <property type="entry name" value="LRR_TYP"/>
    <property type="match status" value="9"/>
</dbReference>
<dbReference type="SUPFAM" id="SSF52058">
    <property type="entry name" value="L domain-like"/>
    <property type="match status" value="1"/>
</dbReference>
<dbReference type="SUPFAM" id="SSF52047">
    <property type="entry name" value="RNI-like"/>
    <property type="match status" value="1"/>
</dbReference>
<protein>
    <recommendedName>
        <fullName evidence="3">Receptor-like protein 32</fullName>
        <shortName evidence="3">AtRLP32</shortName>
    </recommendedName>
</protein>
<gene>
    <name evidence="3" type="primary">RLP32</name>
    <name evidence="5" type="ordered locus">At3g05650</name>
    <name evidence="6" type="ORF">F18C1.8</name>
</gene>
<feature type="signal peptide" evidence="1">
    <location>
        <begin position="1"/>
        <end position="32"/>
    </location>
</feature>
<feature type="chain" id="PRO_0000443960" description="Receptor-like protein 32">
    <location>
        <begin position="33"/>
        <end position="868"/>
    </location>
</feature>
<feature type="topological domain" description="Extracellular" evidence="1">
    <location>
        <begin position="33"/>
        <end position="815"/>
    </location>
</feature>
<feature type="transmembrane region" description="Helical" evidence="1">
    <location>
        <begin position="816"/>
        <end position="836"/>
    </location>
</feature>
<feature type="topological domain" description="Cytoplasmic" evidence="1">
    <location>
        <begin position="837"/>
        <end position="868"/>
    </location>
</feature>
<feature type="repeat" description="LRR 1" evidence="1">
    <location>
        <begin position="118"/>
        <end position="142"/>
    </location>
</feature>
<feature type="repeat" description="LRR 2" evidence="1">
    <location>
        <begin position="143"/>
        <end position="166"/>
    </location>
</feature>
<feature type="repeat" description="LRR 3" evidence="1">
    <location>
        <begin position="168"/>
        <end position="188"/>
    </location>
</feature>
<feature type="repeat" description="LRR 4" evidence="1">
    <location>
        <begin position="189"/>
        <end position="213"/>
    </location>
</feature>
<feature type="repeat" description="LRR 5" evidence="1">
    <location>
        <begin position="214"/>
        <end position="237"/>
    </location>
</feature>
<feature type="repeat" description="LRR 6" evidence="1">
    <location>
        <begin position="239"/>
        <end position="261"/>
    </location>
</feature>
<feature type="repeat" description="LRR 7" evidence="1">
    <location>
        <begin position="262"/>
        <end position="285"/>
    </location>
</feature>
<feature type="repeat" description="LRR 8" evidence="1">
    <location>
        <begin position="287"/>
        <end position="310"/>
    </location>
</feature>
<feature type="repeat" description="LRR 9" evidence="1">
    <location>
        <begin position="312"/>
        <end position="334"/>
    </location>
</feature>
<feature type="repeat" description="LRR 10" evidence="1">
    <location>
        <begin position="335"/>
        <end position="360"/>
    </location>
</feature>
<feature type="repeat" description="LRR 11" evidence="1">
    <location>
        <begin position="362"/>
        <end position="385"/>
    </location>
</feature>
<feature type="repeat" description="LRR 12" evidence="1">
    <location>
        <begin position="389"/>
        <end position="412"/>
    </location>
</feature>
<feature type="repeat" description="LRR 13" evidence="1">
    <location>
        <begin position="413"/>
        <end position="436"/>
    </location>
</feature>
<feature type="repeat" description="LRR 14" evidence="1">
    <location>
        <begin position="438"/>
        <end position="459"/>
    </location>
</feature>
<feature type="repeat" description="LRR 15" evidence="1">
    <location>
        <begin position="465"/>
        <end position="489"/>
    </location>
</feature>
<feature type="repeat" description="LRR 16" evidence="1">
    <location>
        <begin position="490"/>
        <end position="515"/>
    </location>
</feature>
<feature type="repeat" description="LRR 17" evidence="1">
    <location>
        <begin position="517"/>
        <end position="538"/>
    </location>
</feature>
<feature type="repeat" description="LRR 18" evidence="1">
    <location>
        <begin position="540"/>
        <end position="560"/>
    </location>
</feature>
<feature type="repeat" description="LRR 19" evidence="1">
    <location>
        <begin position="561"/>
        <end position="586"/>
    </location>
</feature>
<feature type="repeat" description="LRR 20" evidence="1">
    <location>
        <begin position="588"/>
        <end position="606"/>
    </location>
</feature>
<feature type="repeat" description="LRR 21" evidence="1">
    <location>
        <begin position="607"/>
        <end position="630"/>
    </location>
</feature>
<feature type="repeat" description="LRR 22" evidence="1">
    <location>
        <begin position="675"/>
        <end position="699"/>
    </location>
</feature>
<feature type="repeat" description="LRR 23" evidence="1">
    <location>
        <begin position="700"/>
        <end position="723"/>
    </location>
</feature>
<feature type="repeat" description="LRR 24" evidence="1">
    <location>
        <begin position="724"/>
        <end position="747"/>
    </location>
</feature>
<feature type="repeat" description="LRR 25" evidence="1">
    <location>
        <begin position="749"/>
        <end position="772"/>
    </location>
</feature>
<feature type="glycosylation site" description="N-linked (GlcNAc...) asparagine" evidence="2">
    <location>
        <position position="73"/>
    </location>
</feature>
<feature type="glycosylation site" description="N-linked (GlcNAc...) asparagine" evidence="2">
    <location>
        <position position="109"/>
    </location>
</feature>
<feature type="glycosylation site" description="N-linked (GlcNAc...) asparagine" evidence="2">
    <location>
        <position position="141"/>
    </location>
</feature>
<feature type="glycosylation site" description="N-linked (GlcNAc...) asparagine" evidence="2">
    <location>
        <position position="165"/>
    </location>
</feature>
<feature type="glycosylation site" description="N-linked (GlcNAc...) asparagine" evidence="2">
    <location>
        <position position="233"/>
    </location>
</feature>
<feature type="glycosylation site" description="N-linked (GlcNAc...) asparagine" evidence="2">
    <location>
        <position position="275"/>
    </location>
</feature>
<feature type="glycosylation site" description="N-linked (GlcNAc...) asparagine" evidence="2">
    <location>
        <position position="282"/>
    </location>
</feature>
<feature type="glycosylation site" description="N-linked (GlcNAc...) asparagine" evidence="2">
    <location>
        <position position="342"/>
    </location>
</feature>
<feature type="glycosylation site" description="N-linked (GlcNAc...) asparagine" evidence="2">
    <location>
        <position position="347"/>
    </location>
</feature>
<feature type="glycosylation site" description="N-linked (GlcNAc...) asparagine" evidence="2">
    <location>
        <position position="477"/>
    </location>
</feature>
<feature type="glycosylation site" description="N-linked (GlcNAc...) asparagine" evidence="2">
    <location>
        <position position="503"/>
    </location>
</feature>
<feature type="glycosylation site" description="N-linked (GlcNAc...) asparagine" evidence="2">
    <location>
        <position position="574"/>
    </location>
</feature>
<feature type="glycosylation site" description="N-linked (GlcNAc...) asparagine" evidence="2">
    <location>
        <position position="613"/>
    </location>
</feature>
<feature type="glycosylation site" description="N-linked (GlcNAc...) asparagine" evidence="2">
    <location>
        <position position="706"/>
    </location>
</feature>
<feature type="glycosylation site" description="N-linked (GlcNAc...) asparagine" evidence="2">
    <location>
        <position position="746"/>
    </location>
</feature>
<feature type="glycosylation site" description="N-linked (GlcNAc...) asparagine" evidence="2">
    <location>
        <position position="754"/>
    </location>
</feature>
<feature type="glycosylation site" description="N-linked (GlcNAc...) asparagine" evidence="2">
    <location>
        <position position="774"/>
    </location>
</feature>
<feature type="sequence conflict" description="In Ref. 3; AY075647." evidence="4" ref="3">
    <original>H</original>
    <variation>Y</variation>
    <location>
        <position position="860"/>
    </location>
</feature>
<accession>Q9M9X0</accession>
<sequence length="868" mass="97303">MKDSWNSTSIIPFTFSSLIFFLFTFDFQDVFGVPTKHLCRLEQRDALLELKKEFKIKKPCFDGLHPTTESWANNSDCCYWDGITCNDKSGEVLELDLSRSCLQSRFHSNSSLFTVLNLRFLTTLDLSYNYFSGQIPSCIENFSHLTTLDLSKNYFSGGIPSSIGNLSQLTFLDLSGNEFVGEMPFFGNMNQLTNLYVDSNDLTGIFPLSLLNLKHLSDLSLSRNQFTGTLPSNMSSLSNLEYFEAWGNAFTGTLPSSLFTIASLTSINLRNNQLNGTLEFGNISSPSTLTVLDISNNNFIGPIPKSISKFINLQDLDLSHLNTQGPVDFSIFTNLKSLQLLNLSHLNTTTTIDLNALFSSHLNSIYSMDLSGNHVSATTKISVADHHPTQLISQLYLSGCGITEFPELLRSQHKMTNLDISNNKIKGQVPGWLWTLPKLIFVDLSNNIFTGFERSTEHGLSLITKPSMQYLVGSNNNFTGKIPSFICALRSLITLDLSDNNLNGSIPPCMGNLKSTLSFLNLRQNRLGGGLPRSIFKSLRSLDVGHNQLVGKLPRSFIRLSALEVLNVENNRINDTFPFWLSSLKKLQVLVLRSNAFHGPIHHASFHTLRIINLSHNQFSGTLPANYFVNWNAMSSLMATEDRSQEKYMGDSFRYYHDSVVLMNKGLEMELVRILKIYTALDFSENKLEGEIPRSIGLLKELHVLNLSSNAFTGHIPSSMGNLRELESLDVSQNKLSGEIPQELGNLSYLAYMNFSHNQLGGLVPGGTQFRRQNCSSFKDNPGLYGSSLEEVCLDIHAPAPQQHEPPELEEEDREVFSWIAAAIGFGPGIAFGLTIRYILVFYKPDWFMHTFGHLQPSAHEKRLRRKQ</sequence>
<proteinExistence type="evidence at transcript level"/>
<evidence type="ECO:0000255" key="1"/>
<evidence type="ECO:0000255" key="2">
    <source>
        <dbReference type="PROSITE-ProRule" id="PRU00498"/>
    </source>
</evidence>
<evidence type="ECO:0000303" key="3">
    <source>
    </source>
</evidence>
<evidence type="ECO:0000305" key="4"/>
<evidence type="ECO:0000312" key="5">
    <source>
        <dbReference type="Araport" id="AT3G05650"/>
    </source>
</evidence>
<evidence type="ECO:0000312" key="6">
    <source>
        <dbReference type="EMBL" id="AAF26132.1"/>
    </source>
</evidence>
<comment type="subcellular location">
    <subcellularLocation>
        <location evidence="4">Cell membrane</location>
        <topology evidence="4">Single-pass type I membrane protein</topology>
    </subcellularLocation>
</comment>
<comment type="similarity">
    <text evidence="4">Belongs to the RLP family.</text>
</comment>
<comment type="sequence caution" evidence="4">
    <conflict type="frameshift">
        <sequence resource="EMBL" id="AY075647"/>
    </conflict>
</comment>
<keyword id="KW-1003">Cell membrane</keyword>
<keyword id="KW-0325">Glycoprotein</keyword>
<keyword id="KW-0433">Leucine-rich repeat</keyword>
<keyword id="KW-0472">Membrane</keyword>
<keyword id="KW-0675">Receptor</keyword>
<keyword id="KW-1185">Reference proteome</keyword>
<keyword id="KW-0677">Repeat</keyword>
<keyword id="KW-0732">Signal</keyword>
<keyword id="KW-0812">Transmembrane</keyword>
<keyword id="KW-1133">Transmembrane helix</keyword>
<name>RLP32_ARATH</name>